<dbReference type="EC" id="1.14.-.-"/>
<dbReference type="EMBL" id="AE013599">
    <property type="protein sequence ID" value="AAG22287.3"/>
    <property type="molecule type" value="Genomic_DNA"/>
</dbReference>
<dbReference type="EMBL" id="BT031280">
    <property type="protein sequence ID" value="ABY20521.1"/>
    <property type="molecule type" value="mRNA"/>
</dbReference>
<dbReference type="EMBL" id="AY061415">
    <property type="protein sequence ID" value="AAL28963.1"/>
    <property type="status" value="ALT_INIT"/>
    <property type="molecule type" value="mRNA"/>
</dbReference>
<dbReference type="EMBL" id="BT001433">
    <property type="protein sequence ID" value="AAN71188.1"/>
    <property type="molecule type" value="mRNA"/>
</dbReference>
<dbReference type="RefSeq" id="NP_995812.1">
    <property type="nucleotide sequence ID" value="NM_206090.2"/>
</dbReference>
<dbReference type="SMR" id="Q7KR10"/>
<dbReference type="FunCoup" id="Q7KR10">
    <property type="interactions" value="76"/>
</dbReference>
<dbReference type="IntAct" id="Q7KR10">
    <property type="interactions" value="45"/>
</dbReference>
<dbReference type="STRING" id="7227.FBpp0088436"/>
<dbReference type="PaxDb" id="7227-FBpp0088436"/>
<dbReference type="DNASU" id="2768720"/>
<dbReference type="EnsemblMetazoa" id="FBtr0089418">
    <property type="protein sequence ID" value="FBpp0088436"/>
    <property type="gene ID" value="FBgn0053503"/>
</dbReference>
<dbReference type="GeneID" id="2768720"/>
<dbReference type="KEGG" id="dme:Dmel_CG33503"/>
<dbReference type="UCSC" id="CG33503-RA">
    <property type="organism name" value="d. melanogaster"/>
</dbReference>
<dbReference type="AGR" id="FB:FBgn0053503"/>
<dbReference type="CTD" id="2768720"/>
<dbReference type="FlyBase" id="FBgn0053503">
    <property type="gene designation" value="Cyp12d1-d"/>
</dbReference>
<dbReference type="VEuPathDB" id="VectorBase:FBgn0053503"/>
<dbReference type="eggNOG" id="KOG0159">
    <property type="taxonomic scope" value="Eukaryota"/>
</dbReference>
<dbReference type="GeneTree" id="ENSGT00940000165868"/>
<dbReference type="HOGENOM" id="CLU_001570_28_0_1"/>
<dbReference type="InParanoid" id="Q7KR10"/>
<dbReference type="OrthoDB" id="3945418at2759"/>
<dbReference type="PhylomeDB" id="Q7KR10"/>
<dbReference type="BioGRID-ORCS" id="2768720">
    <property type="hits" value="0 hits in 3 CRISPR screens"/>
</dbReference>
<dbReference type="ChiTaRS" id="Cyp12d1-p">
    <property type="organism name" value="fly"/>
</dbReference>
<dbReference type="GenomeRNAi" id="2768720"/>
<dbReference type="PRO" id="PR:Q7KR10"/>
<dbReference type="Proteomes" id="UP000000803">
    <property type="component" value="Chromosome 2R"/>
</dbReference>
<dbReference type="Bgee" id="FBgn0053503">
    <property type="expression patterns" value="Expressed in adult Malpighian tubule principal cell of lower segment in Malpighian tubule and 23 other cell types or tissues"/>
</dbReference>
<dbReference type="GO" id="GO:0031966">
    <property type="term" value="C:mitochondrial membrane"/>
    <property type="evidence" value="ECO:0007669"/>
    <property type="project" value="UniProtKB-SubCell"/>
</dbReference>
<dbReference type="GO" id="GO:0005739">
    <property type="term" value="C:mitochondrion"/>
    <property type="evidence" value="ECO:0000250"/>
    <property type="project" value="UniProtKB"/>
</dbReference>
<dbReference type="GO" id="GO:0030342">
    <property type="term" value="F:1-alpha,25-dihydroxyvitamin D3 24-hydroxylase activity"/>
    <property type="evidence" value="ECO:0000250"/>
    <property type="project" value="UniProtKB"/>
</dbReference>
<dbReference type="GO" id="GO:0020037">
    <property type="term" value="F:heme binding"/>
    <property type="evidence" value="ECO:0007669"/>
    <property type="project" value="InterPro"/>
</dbReference>
<dbReference type="GO" id="GO:0005506">
    <property type="term" value="F:iron ion binding"/>
    <property type="evidence" value="ECO:0007669"/>
    <property type="project" value="InterPro"/>
</dbReference>
<dbReference type="GO" id="GO:0016705">
    <property type="term" value="F:oxidoreductase activity, acting on paired donors, with incorporation or reduction of molecular oxygen"/>
    <property type="evidence" value="ECO:0007669"/>
    <property type="project" value="InterPro"/>
</dbReference>
<dbReference type="GO" id="GO:0046680">
    <property type="term" value="P:response to DDT"/>
    <property type="evidence" value="ECO:0000315"/>
    <property type="project" value="FlyBase"/>
</dbReference>
<dbReference type="GO" id="GO:0017085">
    <property type="term" value="P:response to insecticide"/>
    <property type="evidence" value="ECO:0000315"/>
    <property type="project" value="FlyBase"/>
</dbReference>
<dbReference type="GO" id="GO:0042369">
    <property type="term" value="P:vitamin D catabolic process"/>
    <property type="evidence" value="ECO:0000250"/>
    <property type="project" value="UniProtKB"/>
</dbReference>
<dbReference type="CDD" id="cd11054">
    <property type="entry name" value="CYP24A1-like"/>
    <property type="match status" value="1"/>
</dbReference>
<dbReference type="FunFam" id="1.10.630.10:FF:000006">
    <property type="entry name" value="Cytochrome P450 302a1, mitochondrial"/>
    <property type="match status" value="1"/>
</dbReference>
<dbReference type="Gene3D" id="1.10.630.10">
    <property type="entry name" value="Cytochrome P450"/>
    <property type="match status" value="1"/>
</dbReference>
<dbReference type="InterPro" id="IPR050479">
    <property type="entry name" value="CYP11_CYP27_families"/>
</dbReference>
<dbReference type="InterPro" id="IPR001128">
    <property type="entry name" value="Cyt_P450"/>
</dbReference>
<dbReference type="InterPro" id="IPR017972">
    <property type="entry name" value="Cyt_P450_CS"/>
</dbReference>
<dbReference type="InterPro" id="IPR002401">
    <property type="entry name" value="Cyt_P450_E_grp-I"/>
</dbReference>
<dbReference type="InterPro" id="IPR036396">
    <property type="entry name" value="Cyt_P450_sf"/>
</dbReference>
<dbReference type="PANTHER" id="PTHR24279">
    <property type="entry name" value="CYTOCHROME P450"/>
    <property type="match status" value="1"/>
</dbReference>
<dbReference type="PANTHER" id="PTHR24279:SF120">
    <property type="entry name" value="CYTOCHROME P450"/>
    <property type="match status" value="1"/>
</dbReference>
<dbReference type="Pfam" id="PF00067">
    <property type="entry name" value="p450"/>
    <property type="match status" value="1"/>
</dbReference>
<dbReference type="PRINTS" id="PR00463">
    <property type="entry name" value="EP450I"/>
</dbReference>
<dbReference type="PRINTS" id="PR00385">
    <property type="entry name" value="P450"/>
</dbReference>
<dbReference type="SUPFAM" id="SSF48264">
    <property type="entry name" value="Cytochrome P450"/>
    <property type="match status" value="1"/>
</dbReference>
<dbReference type="PROSITE" id="PS00086">
    <property type="entry name" value="CYTOCHROME_P450"/>
    <property type="match status" value="1"/>
</dbReference>
<keyword id="KW-0349">Heme</keyword>
<keyword id="KW-0408">Iron</keyword>
<keyword id="KW-0472">Membrane</keyword>
<keyword id="KW-0479">Metal-binding</keyword>
<keyword id="KW-0496">Mitochondrion</keyword>
<keyword id="KW-0503">Monooxygenase</keyword>
<keyword id="KW-0560">Oxidoreductase</keyword>
<keyword id="KW-1185">Reference proteome</keyword>
<keyword id="KW-0809">Transit peptide</keyword>
<accession>Q7KR10</accession>
<accession>A9UNB6</accession>
<accession>Q95RF5</accession>
<evidence type="ECO:0000250" key="1"/>
<evidence type="ECO:0000250" key="2">
    <source>
        <dbReference type="UniProtKB" id="P82712"/>
    </source>
</evidence>
<evidence type="ECO:0000255" key="3"/>
<evidence type="ECO:0000269" key="4">
    <source>
    </source>
</evidence>
<evidence type="ECO:0000269" key="5">
    <source>
    </source>
</evidence>
<evidence type="ECO:0000269" key="6">
    <source>
    </source>
</evidence>
<evidence type="ECO:0000305" key="7"/>
<evidence type="ECO:0000312" key="8">
    <source>
        <dbReference type="EMBL" id="AAG22287.3"/>
    </source>
</evidence>
<evidence type="ECO:0000312" key="9">
    <source>
        <dbReference type="EMBL" id="AAL28963.1"/>
    </source>
</evidence>
<name>CCD1D_DROME</name>
<protein>
    <recommendedName>
        <fullName>Probable cytochrome P450 12d1 distal, mitochondrial</fullName>
        <ecNumber>1.14.-.-</ecNumber>
    </recommendedName>
    <alternativeName>
        <fullName>CYPXIID1</fullName>
    </alternativeName>
</protein>
<sequence length="521" mass="60275">MNTLSSARSVAIYVGPVRSSRSASVLAHEQAKSSITEEHKTYDEIPRPNKFKFMRAFMPGGEFQNASITEYTSAMRKRYGDIYVMPGMFGRKDWVTTFNTKDIEMVFRNEGIWPRRDGLDSIVYFREHVRPDVYGEVQGLVASQNEAWGKLRSAINPIFMQPRGLRMYYEPLSNINNEFIERIKEIRDPKTLEVPEDFTDEISRLVFESLGLVAFDRQMGLIRKNRDNSDALTLFQTSRDIFRLTFKLDIQPSMWKIISTPTYRKMKRTLNDSLNVSQKMLKENQDALEKRRQAGEKINSNSMLERLMEIDPKVAVIMSLDILFAGVDATATLLSAVLLCLSKHPDKQAKLREELLSIMPTKDSLLNEENMKDMPYLRAVIKETLRYYPNGFGTMRTCQNDVILSGYRVPKGTTVLLGSNVLMKEATYYPRPDEFLPERWLRDPETGKKMQVSPFTFLPFGFGPRMCIGKRVVDLEMETTVAKLIRNFHVEFNRDASRPFKTMFLMEPAITFPFKFTDIEQ</sequence>
<comment type="cofactor">
    <cofactor evidence="1">
        <name>heme</name>
        <dbReference type="ChEBI" id="CHEBI:30413"/>
    </cofactor>
</comment>
<comment type="subcellular location">
    <subcellularLocation>
        <location evidence="7">Mitochondrion membrane</location>
    </subcellularLocation>
</comment>
<comment type="developmental stage">
    <text evidence="6">Only expressed in adults. Expression varies in DDT resistant strains (Wisconsin, 91-R and Hikone-R).</text>
</comment>
<comment type="similarity">
    <text evidence="3">Belongs to the cytochrome P450 family.</text>
</comment>
<comment type="sequence caution" evidence="7">
    <conflict type="erroneous initiation">
        <sequence resource="EMBL-CDS" id="AAL28963"/>
    </conflict>
</comment>
<feature type="transit peptide" description="Mitochondrion" evidence="3">
    <location>
        <begin position="1"/>
        <end position="19"/>
    </location>
</feature>
<feature type="chain" id="PRO_0000042639" description="Probable cytochrome P450 12d1 distal, mitochondrial">
    <location>
        <begin position="20"/>
        <end position="521"/>
    </location>
</feature>
<feature type="binding site" description="axial binding residue" evidence="2">
    <location>
        <position position="467"/>
    </location>
    <ligand>
        <name>heme</name>
        <dbReference type="ChEBI" id="CHEBI:30413"/>
    </ligand>
    <ligandPart>
        <name>Fe</name>
        <dbReference type="ChEBI" id="CHEBI:18248"/>
    </ligandPart>
</feature>
<feature type="sequence conflict" description="In Ref. 4; AAN71188." evidence="7" ref="4">
    <original>W</original>
    <variation>S</variation>
    <location>
        <position position="94"/>
    </location>
</feature>
<gene>
    <name evidence="8" type="primary">Cyp12d1-d</name>
    <name evidence="2" type="synonym">Cyp12d1</name>
    <name type="ORF">CG33503</name>
</gene>
<reference evidence="8" key="1">
    <citation type="journal article" date="2000" name="Science">
        <title>The genome sequence of Drosophila melanogaster.</title>
        <authorList>
            <person name="Adams M.D."/>
            <person name="Celniker S.E."/>
            <person name="Holt R.A."/>
            <person name="Evans C.A."/>
            <person name="Gocayne J.D."/>
            <person name="Amanatides P.G."/>
            <person name="Scherer S.E."/>
            <person name="Li P.W."/>
            <person name="Hoskins R.A."/>
            <person name="Galle R.F."/>
            <person name="George R.A."/>
            <person name="Lewis S.E."/>
            <person name="Richards S."/>
            <person name="Ashburner M."/>
            <person name="Henderson S.N."/>
            <person name="Sutton G.G."/>
            <person name="Wortman J.R."/>
            <person name="Yandell M.D."/>
            <person name="Zhang Q."/>
            <person name="Chen L.X."/>
            <person name="Brandon R.C."/>
            <person name="Rogers Y.-H.C."/>
            <person name="Blazej R.G."/>
            <person name="Champe M."/>
            <person name="Pfeiffer B.D."/>
            <person name="Wan K.H."/>
            <person name="Doyle C."/>
            <person name="Baxter E.G."/>
            <person name="Helt G."/>
            <person name="Nelson C.R."/>
            <person name="Miklos G.L.G."/>
            <person name="Abril J.F."/>
            <person name="Agbayani A."/>
            <person name="An H.-J."/>
            <person name="Andrews-Pfannkoch C."/>
            <person name="Baldwin D."/>
            <person name="Ballew R.M."/>
            <person name="Basu A."/>
            <person name="Baxendale J."/>
            <person name="Bayraktaroglu L."/>
            <person name="Beasley E.M."/>
            <person name="Beeson K.Y."/>
            <person name="Benos P.V."/>
            <person name="Berman B.P."/>
            <person name="Bhandari D."/>
            <person name="Bolshakov S."/>
            <person name="Borkova D."/>
            <person name="Botchan M.R."/>
            <person name="Bouck J."/>
            <person name="Brokstein P."/>
            <person name="Brottier P."/>
            <person name="Burtis K.C."/>
            <person name="Busam D.A."/>
            <person name="Butler H."/>
            <person name="Cadieu E."/>
            <person name="Center A."/>
            <person name="Chandra I."/>
            <person name="Cherry J.M."/>
            <person name="Cawley S."/>
            <person name="Dahlke C."/>
            <person name="Davenport L.B."/>
            <person name="Davies P."/>
            <person name="de Pablos B."/>
            <person name="Delcher A."/>
            <person name="Deng Z."/>
            <person name="Mays A.D."/>
            <person name="Dew I."/>
            <person name="Dietz S.M."/>
            <person name="Dodson K."/>
            <person name="Doup L.E."/>
            <person name="Downes M."/>
            <person name="Dugan-Rocha S."/>
            <person name="Dunkov B.C."/>
            <person name="Dunn P."/>
            <person name="Durbin K.J."/>
            <person name="Evangelista C.C."/>
            <person name="Ferraz C."/>
            <person name="Ferriera S."/>
            <person name="Fleischmann W."/>
            <person name="Fosler C."/>
            <person name="Gabrielian A.E."/>
            <person name="Garg N.S."/>
            <person name="Gelbart W.M."/>
            <person name="Glasser K."/>
            <person name="Glodek A."/>
            <person name="Gong F."/>
            <person name="Gorrell J.H."/>
            <person name="Gu Z."/>
            <person name="Guan P."/>
            <person name="Harris M."/>
            <person name="Harris N.L."/>
            <person name="Harvey D.A."/>
            <person name="Heiman T.J."/>
            <person name="Hernandez J.R."/>
            <person name="Houck J."/>
            <person name="Hostin D."/>
            <person name="Houston K.A."/>
            <person name="Howland T.J."/>
            <person name="Wei M.-H."/>
            <person name="Ibegwam C."/>
            <person name="Jalali M."/>
            <person name="Kalush F."/>
            <person name="Karpen G.H."/>
            <person name="Ke Z."/>
            <person name="Kennison J.A."/>
            <person name="Ketchum K.A."/>
            <person name="Kimmel B.E."/>
            <person name="Kodira C.D."/>
            <person name="Kraft C.L."/>
            <person name="Kravitz S."/>
            <person name="Kulp D."/>
            <person name="Lai Z."/>
            <person name="Lasko P."/>
            <person name="Lei Y."/>
            <person name="Levitsky A.A."/>
            <person name="Li J.H."/>
            <person name="Li Z."/>
            <person name="Liang Y."/>
            <person name="Lin X."/>
            <person name="Liu X."/>
            <person name="Mattei B."/>
            <person name="McIntosh T.C."/>
            <person name="McLeod M.P."/>
            <person name="McPherson D."/>
            <person name="Merkulov G."/>
            <person name="Milshina N.V."/>
            <person name="Mobarry C."/>
            <person name="Morris J."/>
            <person name="Moshrefi A."/>
            <person name="Mount S.M."/>
            <person name="Moy M."/>
            <person name="Murphy B."/>
            <person name="Murphy L."/>
            <person name="Muzny D.M."/>
            <person name="Nelson D.L."/>
            <person name="Nelson D.R."/>
            <person name="Nelson K.A."/>
            <person name="Nixon K."/>
            <person name="Nusskern D.R."/>
            <person name="Pacleb J.M."/>
            <person name="Palazzolo M."/>
            <person name="Pittman G.S."/>
            <person name="Pan S."/>
            <person name="Pollard J."/>
            <person name="Puri V."/>
            <person name="Reese M.G."/>
            <person name="Reinert K."/>
            <person name="Remington K."/>
            <person name="Saunders R.D.C."/>
            <person name="Scheeler F."/>
            <person name="Shen H."/>
            <person name="Shue B.C."/>
            <person name="Siden-Kiamos I."/>
            <person name="Simpson M."/>
            <person name="Skupski M.P."/>
            <person name="Smith T.J."/>
            <person name="Spier E."/>
            <person name="Spradling A.C."/>
            <person name="Stapleton M."/>
            <person name="Strong R."/>
            <person name="Sun E."/>
            <person name="Svirskas R."/>
            <person name="Tector C."/>
            <person name="Turner R."/>
            <person name="Venter E."/>
            <person name="Wang A.H."/>
            <person name="Wang X."/>
            <person name="Wang Z.-Y."/>
            <person name="Wassarman D.A."/>
            <person name="Weinstock G.M."/>
            <person name="Weissenbach J."/>
            <person name="Williams S.M."/>
            <person name="Woodage T."/>
            <person name="Worley K.C."/>
            <person name="Wu D."/>
            <person name="Yang S."/>
            <person name="Yao Q.A."/>
            <person name="Ye J."/>
            <person name="Yeh R.-F."/>
            <person name="Zaveri J.S."/>
            <person name="Zhan M."/>
            <person name="Zhang G."/>
            <person name="Zhao Q."/>
            <person name="Zheng L."/>
            <person name="Zheng X.H."/>
            <person name="Zhong F.N."/>
            <person name="Zhong W."/>
            <person name="Zhou X."/>
            <person name="Zhu S.C."/>
            <person name="Zhu X."/>
            <person name="Smith H.O."/>
            <person name="Gibbs R.A."/>
            <person name="Myers E.W."/>
            <person name="Rubin G.M."/>
            <person name="Venter J.C."/>
        </authorList>
    </citation>
    <scope>NUCLEOTIDE SEQUENCE [LARGE SCALE GENOMIC DNA]</scope>
    <source>
        <strain evidence="4">Berkeley</strain>
    </source>
</reference>
<reference evidence="7 8" key="2">
    <citation type="journal article" date="2002" name="Genome Biol.">
        <title>Annotation of the Drosophila melanogaster euchromatic genome: a systematic review.</title>
        <authorList>
            <person name="Misra S."/>
            <person name="Crosby M.A."/>
            <person name="Mungall C.J."/>
            <person name="Matthews B.B."/>
            <person name="Campbell K.S."/>
            <person name="Hradecky P."/>
            <person name="Huang Y."/>
            <person name="Kaminker J.S."/>
            <person name="Millburn G.H."/>
            <person name="Prochnik S.E."/>
            <person name="Smith C.D."/>
            <person name="Tupy J.L."/>
            <person name="Whitfield E.J."/>
            <person name="Bayraktaroglu L."/>
            <person name="Berman B.P."/>
            <person name="Bettencourt B.R."/>
            <person name="Celniker S.E."/>
            <person name="de Grey A.D.N.J."/>
            <person name="Drysdale R.A."/>
            <person name="Harris N.L."/>
            <person name="Richter J."/>
            <person name="Russo S."/>
            <person name="Schroeder A.J."/>
            <person name="Shu S.Q."/>
            <person name="Stapleton M."/>
            <person name="Yamada C."/>
            <person name="Ashburner M."/>
            <person name="Gelbart W.M."/>
            <person name="Rubin G.M."/>
            <person name="Lewis S.E."/>
        </authorList>
    </citation>
    <scope>GENOME REANNOTATION</scope>
    <source>
        <strain>Berkeley</strain>
    </source>
</reference>
<reference key="3">
    <citation type="submission" date="2007-12" db="EMBL/GenBank/DDBJ databases">
        <authorList>
            <person name="Stapleton M."/>
            <person name="Carlson J.W."/>
            <person name="Frise E."/>
            <person name="Kapadia B."/>
            <person name="Park S."/>
            <person name="Wan K.H."/>
            <person name="Yu C."/>
            <person name="Celniker S.E."/>
        </authorList>
    </citation>
    <scope>NUCLEOTIDE SEQUENCE [LARGE SCALE MRNA]</scope>
    <source>
        <strain>Berkeley</strain>
        <tissue>Larva</tissue>
        <tissue>Pupae</tissue>
    </source>
</reference>
<reference evidence="7 9" key="4">
    <citation type="journal article" date="2002" name="Genome Biol.">
        <title>A Drosophila full-length cDNA resource.</title>
        <authorList>
            <person name="Stapleton M."/>
            <person name="Carlson J.W."/>
            <person name="Brokstein P."/>
            <person name="Yu C."/>
            <person name="Champe M."/>
            <person name="George R.A."/>
            <person name="Guarin H."/>
            <person name="Kronmiller B."/>
            <person name="Pacleb J.M."/>
            <person name="Park S."/>
            <person name="Wan K.H."/>
            <person name="Rubin G.M."/>
            <person name="Celniker S.E."/>
        </authorList>
    </citation>
    <scope>NUCLEOTIDE SEQUENCE [LARGE SCALE MRNA] OF 3-521</scope>
    <source>
        <strain evidence="5">Berkeley</strain>
        <tissue evidence="5">Embryo</tissue>
        <tissue evidence="5">Head</tissue>
    </source>
</reference>
<reference evidence="7" key="5">
    <citation type="journal article" date="2005" name="Insect Mol. Biol.">
        <title>Expression of Cyp6g1 and Cyp12d1 in DDT resistant and susceptible strains of Drosophila melanogaster.</title>
        <authorList>
            <person name="Festucci-Buselli R.A."/>
            <person name="Carvalho-Dias A.S."/>
            <person name="de Oliveira-Andrade M."/>
            <person name="Caixeta-Nunes C."/>
            <person name="Li H.-M."/>
            <person name="Stuart J.J."/>
            <person name="Muir W."/>
            <person name="Scharf M.E."/>
            <person name="Pittendrigh B.R."/>
        </authorList>
    </citation>
    <scope>DEVELOPMENTAL STAGE</scope>
</reference>
<organism>
    <name type="scientific">Drosophila melanogaster</name>
    <name type="common">Fruit fly</name>
    <dbReference type="NCBI Taxonomy" id="7227"/>
    <lineage>
        <taxon>Eukaryota</taxon>
        <taxon>Metazoa</taxon>
        <taxon>Ecdysozoa</taxon>
        <taxon>Arthropoda</taxon>
        <taxon>Hexapoda</taxon>
        <taxon>Insecta</taxon>
        <taxon>Pterygota</taxon>
        <taxon>Neoptera</taxon>
        <taxon>Endopterygota</taxon>
        <taxon>Diptera</taxon>
        <taxon>Brachycera</taxon>
        <taxon>Muscomorpha</taxon>
        <taxon>Ephydroidea</taxon>
        <taxon>Drosophilidae</taxon>
        <taxon>Drosophila</taxon>
        <taxon>Sophophora</taxon>
    </lineage>
</organism>
<proteinExistence type="evidence at transcript level"/>